<name>PER6_VITVI</name>
<reference evidence="4" key="1">
    <citation type="submission" date="2008-07" db="UniProtKB">
        <authorList>
            <person name="Belchi-Navarro S."/>
            <person name="Almagro L."/>
            <person name="Bru R."/>
            <person name="Pedreno M.A."/>
        </authorList>
    </citation>
    <scope>PROTEIN SEQUENCE</scope>
</reference>
<sequence length="15" mass="1560">MGNISPLTGTNGEIR</sequence>
<accession>P85995</accession>
<organism>
    <name type="scientific">Vitis vinifera</name>
    <name type="common">Grape</name>
    <dbReference type="NCBI Taxonomy" id="29760"/>
    <lineage>
        <taxon>Eukaryota</taxon>
        <taxon>Viridiplantae</taxon>
        <taxon>Streptophyta</taxon>
        <taxon>Embryophyta</taxon>
        <taxon>Tracheophyta</taxon>
        <taxon>Spermatophyta</taxon>
        <taxon>Magnoliopsida</taxon>
        <taxon>eudicotyledons</taxon>
        <taxon>Gunneridae</taxon>
        <taxon>Pentapetalae</taxon>
        <taxon>rosids</taxon>
        <taxon>Vitales</taxon>
        <taxon>Vitaceae</taxon>
        <taxon>Viteae</taxon>
        <taxon>Vitis</taxon>
    </lineage>
</organism>
<keyword id="KW-0106">Calcium</keyword>
<keyword id="KW-0903">Direct protein sequencing</keyword>
<keyword id="KW-0349">Heme</keyword>
<keyword id="KW-0376">Hydrogen peroxide</keyword>
<keyword id="KW-0408">Iron</keyword>
<keyword id="KW-0479">Metal-binding</keyword>
<keyword id="KW-0560">Oxidoreductase</keyword>
<keyword id="KW-0575">Peroxidase</keyword>
<keyword id="KW-0964">Secreted</keyword>
<protein>
    <recommendedName>
        <fullName evidence="2">Peroxidase 6</fullName>
        <ecNumber>1.11.1.7</ecNumber>
    </recommendedName>
</protein>
<feature type="chain" id="PRO_0000363740" description="Peroxidase 6">
    <location>
        <begin position="1" status="less than"/>
        <end position="15" status="greater than"/>
    </location>
</feature>
<feature type="unsure residue" description="M or F">
    <location>
        <position position="1"/>
    </location>
</feature>
<feature type="unsure residue" description="I or L">
    <location>
        <position position="4"/>
    </location>
</feature>
<feature type="unsure residue" description="L or I">
    <location>
        <position position="7"/>
    </location>
</feature>
<feature type="unsure residue" description="I or L">
    <location>
        <position position="14"/>
    </location>
</feature>
<feature type="non-terminal residue">
    <location>
        <position position="1"/>
    </location>
</feature>
<feature type="non-terminal residue">
    <location>
        <position position="15"/>
    </location>
</feature>
<proteinExistence type="evidence at protein level"/>
<dbReference type="EC" id="1.11.1.7"/>
<dbReference type="GO" id="GO:0005576">
    <property type="term" value="C:extracellular region"/>
    <property type="evidence" value="ECO:0007669"/>
    <property type="project" value="UniProtKB-SubCell"/>
</dbReference>
<dbReference type="GO" id="GO:0140825">
    <property type="term" value="F:lactoperoxidase activity"/>
    <property type="evidence" value="ECO:0007669"/>
    <property type="project" value="UniProtKB-EC"/>
</dbReference>
<dbReference type="GO" id="GO:0046872">
    <property type="term" value="F:metal ion binding"/>
    <property type="evidence" value="ECO:0007669"/>
    <property type="project" value="UniProtKB-KW"/>
</dbReference>
<dbReference type="GO" id="GO:0042744">
    <property type="term" value="P:hydrogen peroxide catabolic process"/>
    <property type="evidence" value="ECO:0007669"/>
    <property type="project" value="UniProtKB-KW"/>
</dbReference>
<evidence type="ECO:0000250" key="1">
    <source>
        <dbReference type="UniProtKB" id="P84516"/>
    </source>
</evidence>
<evidence type="ECO:0000250" key="2">
    <source>
        <dbReference type="UniProtKB" id="Q42578"/>
    </source>
</evidence>
<evidence type="ECO:0000255" key="3">
    <source>
        <dbReference type="PROSITE-ProRule" id="PRU00297"/>
    </source>
</evidence>
<evidence type="ECO:0000305" key="4"/>
<comment type="function">
    <text evidence="4">Removal of H(2)O(2), oxidation of toxic reductants, biosynthesis and degradation of lignin, suberization, auxin catabolism, response to environmental stresses such as wounding, pathogen attack and oxidative stress. These functions might be dependent on each isozyme/isoform in each plant tissue.</text>
</comment>
<comment type="catalytic activity">
    <reaction>
        <text>2 a phenolic donor + H2O2 = 2 a phenolic radical donor + 2 H2O</text>
        <dbReference type="Rhea" id="RHEA:56136"/>
        <dbReference type="ChEBI" id="CHEBI:15377"/>
        <dbReference type="ChEBI" id="CHEBI:16240"/>
        <dbReference type="ChEBI" id="CHEBI:139520"/>
        <dbReference type="ChEBI" id="CHEBI:139521"/>
        <dbReference type="EC" id="1.11.1.7"/>
    </reaction>
</comment>
<comment type="cofactor">
    <cofactor evidence="2 3">
        <name>heme b</name>
        <dbReference type="ChEBI" id="CHEBI:60344"/>
    </cofactor>
    <text evidence="2 3">Binds 1 heme b (iron(II)-protoporphyrin IX) group per subunit.</text>
</comment>
<comment type="cofactor">
    <cofactor evidence="2 3">
        <name>Ca(2+)</name>
        <dbReference type="ChEBI" id="CHEBI:29108"/>
    </cofactor>
    <text evidence="2 3">Binds 2 calcium ions per subunit.</text>
</comment>
<comment type="subcellular location">
    <subcellularLocation>
        <location evidence="1 3">Secreted</location>
    </subcellularLocation>
</comment>
<comment type="similarity">
    <text evidence="3">Belongs to the peroxidase family. Classical plant (class III) peroxidase subfamily.</text>
</comment>